<evidence type="ECO:0000255" key="1">
    <source>
        <dbReference type="HAMAP-Rule" id="MF_00218"/>
    </source>
</evidence>
<organism>
    <name type="scientific">Syntrophotalea carbinolica (strain DSM 2380 / NBRC 103641 / GraBd1)</name>
    <name type="common">Pelobacter carbinolicus</name>
    <dbReference type="NCBI Taxonomy" id="338963"/>
    <lineage>
        <taxon>Bacteria</taxon>
        <taxon>Pseudomonadati</taxon>
        <taxon>Thermodesulfobacteriota</taxon>
        <taxon>Desulfuromonadia</taxon>
        <taxon>Desulfuromonadales</taxon>
        <taxon>Syntrophotaleaceae</taxon>
        <taxon>Syntrophotalea</taxon>
    </lineage>
</organism>
<name>DCUP_SYNC1</name>
<protein>
    <recommendedName>
        <fullName evidence="1">Uroporphyrinogen decarboxylase</fullName>
        <shortName evidence="1">UPD</shortName>
        <shortName evidence="1">URO-D</shortName>
        <ecNumber evidence="1">4.1.1.37</ecNumber>
    </recommendedName>
</protein>
<sequence length="343" mass="37999">MMPEDYDFINACYGRPVTRTPVWLMRQAGRYLPQYRKIRERVKFLELCKTPELAAEVTLQPVDALGVDAAILFSDILIPIEAMGQNLFYRPAPVLEPPVRTAADVEALRVLQPEQDVPFVLETIRLLRRELDGRVPLIGFGGAPFTLACYMVEGAGSRHFLALKRLMYQAPETYARLMDKITDTSIVYLRAQAEAGAQALQVFDSWGGILSPADYQRYVLPYSRRLLSALGDFGIPLIHFVKGAGAMLDLVAMAGGQVVGLDWCTSLNRARDILGNGMAVQGNLDPSVLLGAQDIIEREVRRILDENAGRPGHIFNLGHGILPEVPPENAAFLVDCVHRLTQS</sequence>
<reference key="1">
    <citation type="submission" date="2005-10" db="EMBL/GenBank/DDBJ databases">
        <title>Complete sequence of Pelobacter carbinolicus DSM 2380.</title>
        <authorList>
            <person name="Copeland A."/>
            <person name="Lucas S."/>
            <person name="Lapidus A."/>
            <person name="Barry K."/>
            <person name="Detter J.C."/>
            <person name="Glavina T."/>
            <person name="Hammon N."/>
            <person name="Israni S."/>
            <person name="Pitluck S."/>
            <person name="Chertkov O."/>
            <person name="Schmutz J."/>
            <person name="Larimer F."/>
            <person name="Land M."/>
            <person name="Kyrpides N."/>
            <person name="Ivanova N."/>
            <person name="Richardson P."/>
        </authorList>
    </citation>
    <scope>NUCLEOTIDE SEQUENCE [LARGE SCALE GENOMIC DNA]</scope>
    <source>
        <strain>DSM 2380 / NBRC 103641 / GraBd1</strain>
    </source>
</reference>
<dbReference type="EC" id="4.1.1.37" evidence="1"/>
<dbReference type="EMBL" id="CP000142">
    <property type="protein sequence ID" value="ABA88028.4"/>
    <property type="molecule type" value="Genomic_DNA"/>
</dbReference>
<dbReference type="RefSeq" id="WP_011340475.1">
    <property type="nucleotide sequence ID" value="NC_007498.2"/>
</dbReference>
<dbReference type="SMR" id="Q3A6H9"/>
<dbReference type="STRING" id="338963.Pcar_0769"/>
<dbReference type="KEGG" id="pca:Pcar_0769"/>
<dbReference type="eggNOG" id="COG0407">
    <property type="taxonomic scope" value="Bacteria"/>
</dbReference>
<dbReference type="HOGENOM" id="CLU_040933_0_1_7"/>
<dbReference type="OrthoDB" id="9806656at2"/>
<dbReference type="UniPathway" id="UPA00251">
    <property type="reaction ID" value="UER00321"/>
</dbReference>
<dbReference type="Proteomes" id="UP000002534">
    <property type="component" value="Chromosome"/>
</dbReference>
<dbReference type="GO" id="GO:0005829">
    <property type="term" value="C:cytosol"/>
    <property type="evidence" value="ECO:0007669"/>
    <property type="project" value="TreeGrafter"/>
</dbReference>
<dbReference type="GO" id="GO:0004853">
    <property type="term" value="F:uroporphyrinogen decarboxylase activity"/>
    <property type="evidence" value="ECO:0007669"/>
    <property type="project" value="UniProtKB-UniRule"/>
</dbReference>
<dbReference type="GO" id="GO:0019353">
    <property type="term" value="P:protoporphyrinogen IX biosynthetic process from glutamate"/>
    <property type="evidence" value="ECO:0007669"/>
    <property type="project" value="TreeGrafter"/>
</dbReference>
<dbReference type="CDD" id="cd00717">
    <property type="entry name" value="URO-D"/>
    <property type="match status" value="1"/>
</dbReference>
<dbReference type="FunFam" id="3.20.20.210:FF:000008">
    <property type="entry name" value="Uroporphyrinogen decarboxylase"/>
    <property type="match status" value="1"/>
</dbReference>
<dbReference type="Gene3D" id="3.20.20.210">
    <property type="match status" value="1"/>
</dbReference>
<dbReference type="HAMAP" id="MF_00218">
    <property type="entry name" value="URO_D"/>
    <property type="match status" value="1"/>
</dbReference>
<dbReference type="InterPro" id="IPR038071">
    <property type="entry name" value="UROD/MetE-like_sf"/>
</dbReference>
<dbReference type="InterPro" id="IPR006361">
    <property type="entry name" value="Uroporphyrinogen_deCO2ase_HemE"/>
</dbReference>
<dbReference type="InterPro" id="IPR000257">
    <property type="entry name" value="Uroporphyrinogen_deCOase"/>
</dbReference>
<dbReference type="NCBIfam" id="TIGR01464">
    <property type="entry name" value="hemE"/>
    <property type="match status" value="1"/>
</dbReference>
<dbReference type="PANTHER" id="PTHR21091">
    <property type="entry name" value="METHYLTETRAHYDROFOLATE:HOMOCYSTEINE METHYLTRANSFERASE RELATED"/>
    <property type="match status" value="1"/>
</dbReference>
<dbReference type="PANTHER" id="PTHR21091:SF169">
    <property type="entry name" value="UROPORPHYRINOGEN DECARBOXYLASE"/>
    <property type="match status" value="1"/>
</dbReference>
<dbReference type="Pfam" id="PF01208">
    <property type="entry name" value="URO-D"/>
    <property type="match status" value="1"/>
</dbReference>
<dbReference type="SUPFAM" id="SSF51726">
    <property type="entry name" value="UROD/MetE-like"/>
    <property type="match status" value="1"/>
</dbReference>
<dbReference type="PROSITE" id="PS00906">
    <property type="entry name" value="UROD_1"/>
    <property type="match status" value="1"/>
</dbReference>
<dbReference type="PROSITE" id="PS00907">
    <property type="entry name" value="UROD_2"/>
    <property type="match status" value="1"/>
</dbReference>
<gene>
    <name evidence="1" type="primary">hemE</name>
    <name type="ordered locus">Pcar_0769</name>
</gene>
<keyword id="KW-0963">Cytoplasm</keyword>
<keyword id="KW-0210">Decarboxylase</keyword>
<keyword id="KW-0456">Lyase</keyword>
<keyword id="KW-0627">Porphyrin biosynthesis</keyword>
<keyword id="KW-1185">Reference proteome</keyword>
<accession>Q3A6H9</accession>
<comment type="function">
    <text evidence="1">Catalyzes the decarboxylation of four acetate groups of uroporphyrinogen-III to yield coproporphyrinogen-III.</text>
</comment>
<comment type="catalytic activity">
    <reaction evidence="1">
        <text>uroporphyrinogen III + 4 H(+) = coproporphyrinogen III + 4 CO2</text>
        <dbReference type="Rhea" id="RHEA:19865"/>
        <dbReference type="ChEBI" id="CHEBI:15378"/>
        <dbReference type="ChEBI" id="CHEBI:16526"/>
        <dbReference type="ChEBI" id="CHEBI:57308"/>
        <dbReference type="ChEBI" id="CHEBI:57309"/>
        <dbReference type="EC" id="4.1.1.37"/>
    </reaction>
</comment>
<comment type="pathway">
    <text evidence="1">Porphyrin-containing compound metabolism; protoporphyrin-IX biosynthesis; coproporphyrinogen-III from 5-aminolevulinate: step 4/4.</text>
</comment>
<comment type="subunit">
    <text evidence="1">Homodimer.</text>
</comment>
<comment type="subcellular location">
    <subcellularLocation>
        <location evidence="1">Cytoplasm</location>
    </subcellularLocation>
</comment>
<comment type="similarity">
    <text evidence="1">Belongs to the uroporphyrinogen decarboxylase family.</text>
</comment>
<proteinExistence type="inferred from homology"/>
<feature type="chain" id="PRO_0000325670" description="Uroporphyrinogen decarboxylase">
    <location>
        <begin position="1"/>
        <end position="343"/>
    </location>
</feature>
<feature type="binding site" evidence="1">
    <location>
        <begin position="26"/>
        <end position="30"/>
    </location>
    <ligand>
        <name>substrate</name>
    </ligand>
</feature>
<feature type="binding site" evidence="1">
    <location>
        <position position="75"/>
    </location>
    <ligand>
        <name>substrate</name>
    </ligand>
</feature>
<feature type="binding site" evidence="1">
    <location>
        <position position="150"/>
    </location>
    <ligand>
        <name>substrate</name>
    </ligand>
</feature>
<feature type="binding site" evidence="1">
    <location>
        <position position="205"/>
    </location>
    <ligand>
        <name>substrate</name>
    </ligand>
</feature>
<feature type="binding site" evidence="1">
    <location>
        <position position="319"/>
    </location>
    <ligand>
        <name>substrate</name>
    </ligand>
</feature>
<feature type="site" description="Transition state stabilizer" evidence="1">
    <location>
        <position position="75"/>
    </location>
</feature>